<proteinExistence type="inferred from homology"/>
<feature type="chain" id="PRO_0000353354" description="DNA-directed RNA polymerase subunit beta'">
    <location>
        <begin position="1"/>
        <end position="1438"/>
    </location>
</feature>
<feature type="region of interest" description="Disordered" evidence="2">
    <location>
        <begin position="1413"/>
        <end position="1438"/>
    </location>
</feature>
<feature type="compositionally biased region" description="Low complexity" evidence="2">
    <location>
        <begin position="1413"/>
        <end position="1427"/>
    </location>
</feature>
<feature type="binding site" evidence="1">
    <location>
        <position position="70"/>
    </location>
    <ligand>
        <name>Zn(2+)</name>
        <dbReference type="ChEBI" id="CHEBI:29105"/>
        <label>1</label>
    </ligand>
</feature>
<feature type="binding site" evidence="1">
    <location>
        <position position="72"/>
    </location>
    <ligand>
        <name>Zn(2+)</name>
        <dbReference type="ChEBI" id="CHEBI:29105"/>
        <label>1</label>
    </ligand>
</feature>
<feature type="binding site" evidence="1">
    <location>
        <position position="85"/>
    </location>
    <ligand>
        <name>Zn(2+)</name>
        <dbReference type="ChEBI" id="CHEBI:29105"/>
        <label>1</label>
    </ligand>
</feature>
<feature type="binding site" evidence="1">
    <location>
        <position position="88"/>
    </location>
    <ligand>
        <name>Zn(2+)</name>
        <dbReference type="ChEBI" id="CHEBI:29105"/>
        <label>1</label>
    </ligand>
</feature>
<feature type="binding site" evidence="1">
    <location>
        <position position="461"/>
    </location>
    <ligand>
        <name>Mg(2+)</name>
        <dbReference type="ChEBI" id="CHEBI:18420"/>
    </ligand>
</feature>
<feature type="binding site" evidence="1">
    <location>
        <position position="463"/>
    </location>
    <ligand>
        <name>Mg(2+)</name>
        <dbReference type="ChEBI" id="CHEBI:18420"/>
    </ligand>
</feature>
<feature type="binding site" evidence="1">
    <location>
        <position position="465"/>
    </location>
    <ligand>
        <name>Mg(2+)</name>
        <dbReference type="ChEBI" id="CHEBI:18420"/>
    </ligand>
</feature>
<feature type="binding site" evidence="1">
    <location>
        <position position="821"/>
    </location>
    <ligand>
        <name>Zn(2+)</name>
        <dbReference type="ChEBI" id="CHEBI:29105"/>
        <label>2</label>
    </ligand>
</feature>
<feature type="binding site" evidence="1">
    <location>
        <position position="895"/>
    </location>
    <ligand>
        <name>Zn(2+)</name>
        <dbReference type="ChEBI" id="CHEBI:29105"/>
        <label>2</label>
    </ligand>
</feature>
<feature type="binding site" evidence="1">
    <location>
        <position position="902"/>
    </location>
    <ligand>
        <name>Zn(2+)</name>
        <dbReference type="ChEBI" id="CHEBI:29105"/>
        <label>2</label>
    </ligand>
</feature>
<feature type="binding site" evidence="1">
    <location>
        <position position="905"/>
    </location>
    <ligand>
        <name>Zn(2+)</name>
        <dbReference type="ChEBI" id="CHEBI:29105"/>
        <label>2</label>
    </ligand>
</feature>
<organism>
    <name type="scientific">Erythrobacter litoralis (strain HTCC2594)</name>
    <dbReference type="NCBI Taxonomy" id="314225"/>
    <lineage>
        <taxon>Bacteria</taxon>
        <taxon>Pseudomonadati</taxon>
        <taxon>Pseudomonadota</taxon>
        <taxon>Alphaproteobacteria</taxon>
        <taxon>Sphingomonadales</taxon>
        <taxon>Erythrobacteraceae</taxon>
        <taxon>Erythrobacter/Porphyrobacter group</taxon>
        <taxon>Erythrobacter</taxon>
    </lineage>
</organism>
<accession>Q2N5Q5</accession>
<evidence type="ECO:0000255" key="1">
    <source>
        <dbReference type="HAMAP-Rule" id="MF_01322"/>
    </source>
</evidence>
<evidence type="ECO:0000256" key="2">
    <source>
        <dbReference type="SAM" id="MobiDB-lite"/>
    </source>
</evidence>
<comment type="function">
    <text evidence="1">DNA-dependent RNA polymerase catalyzes the transcription of DNA into RNA using the four ribonucleoside triphosphates as substrates.</text>
</comment>
<comment type="catalytic activity">
    <reaction evidence="1">
        <text>RNA(n) + a ribonucleoside 5'-triphosphate = RNA(n+1) + diphosphate</text>
        <dbReference type="Rhea" id="RHEA:21248"/>
        <dbReference type="Rhea" id="RHEA-COMP:14527"/>
        <dbReference type="Rhea" id="RHEA-COMP:17342"/>
        <dbReference type="ChEBI" id="CHEBI:33019"/>
        <dbReference type="ChEBI" id="CHEBI:61557"/>
        <dbReference type="ChEBI" id="CHEBI:140395"/>
        <dbReference type="EC" id="2.7.7.6"/>
    </reaction>
</comment>
<comment type="cofactor">
    <cofactor evidence="1">
        <name>Mg(2+)</name>
        <dbReference type="ChEBI" id="CHEBI:18420"/>
    </cofactor>
    <text evidence="1">Binds 1 Mg(2+) ion per subunit.</text>
</comment>
<comment type="cofactor">
    <cofactor evidence="1">
        <name>Zn(2+)</name>
        <dbReference type="ChEBI" id="CHEBI:29105"/>
    </cofactor>
    <text evidence="1">Binds 2 Zn(2+) ions per subunit.</text>
</comment>
<comment type="subunit">
    <text evidence="1">The RNAP catalytic core consists of 2 alpha, 1 beta, 1 beta' and 1 omega subunit. When a sigma factor is associated with the core the holoenzyme is formed, which can initiate transcription.</text>
</comment>
<comment type="similarity">
    <text evidence="1">Belongs to the RNA polymerase beta' chain family.</text>
</comment>
<sequence length="1438" mass="159738">MNELTKFTNQLAKPETFDQIQIGIASPERIRSWSFGEIKKPETINYRTFKPERDGLFCARIFGPVKDYECLCGKYKRMKYKGVVCEKCGVEVTVTKVRRERMGHIELAAPVAHIWFLKSLPSRIGLLLDMQLKQLERVLYFEHYIVTEPGLTPLEKFQLLTEDELLEAQDEYGEDAFSAGIGAEAVKFMLMDLDLEQEKEDLLEELATTKSKLKPAKIIKRLKVVESFIESGNRPEWMILEVVPVIPPELRPLVPLDGGRFATSDLNDLYRRVINRNNRLKRLIELRAPDIIVRNEKRMLQESVDALFDNGRRGRVITGANKRPLKSLSDMLKGKQGRFRQNLLGKRVDYSGRSVIVTGPELKLHQCGLPKKMALELFKPFIYARLDAKGLSMTLKQAKKWVEKERKEVWDILDEVIREHPVLLNRAPTLHRLGIQAFEPVLIEGKAIQLHPLVCSAFNADFDGDQMAVHVPLSLEAQLEARVLMMSTNNILSPANGKPIIVPSQDMVLGLYYLSMERQEKTPEYIEEKDGTKIEKLPRFADMAEVHQALETKSVTLHTRIIARVPQADEDGKPEMKRFVTTPGRMLIGECLPKNHKVPYDIVNRLLTKKEIGDVIDQVYRHTGQKDTVLFADAIMVLGFRHAFKAGISFGKDDMIIPDSKEGMIEDTKKQVADYEQQYQDGLITQQEKYNKVIDAWSRCGDQVAEAMMDEIKSQKFDKDGKESEINSIYMMSHSGARGSPAQMKQLAGMRGLMAKPSGEIIENPIISNFKEGLTVLEYFNSTHGARKGLADTALKTANSGYLTRRLVDVSQDCVIVEEDCKTDNALEMRAIVQGGSVIASLGERILGRTLVDDLVNAKTDEVIVKAGTLLDEPMVKAIEEAEVQVARIRSPLVCEADQGVCATCYGRDLARGTPVNIGEAVGVIAAQSIGEPGTQLTMRTFHIGGAAQLNETSHLESISDGKVEYRDMPTITDKKGRILSLARNGELAVIDAEGREREIHKVPYGTVLMHKDGAKVKEGDRLAEWDPFSLPIITEQSGVVKYQDLIEGTTLEEQTDDATGIAQRVVTENRATGRKKKEDLRPRLTLLSEGQSEDETEAQRYLLAPGTTLSVTDGQTVEAGDILARASREAAKTRDITGGLPRVAELFEARVPKDNAVIAKISGKIEFVREYKAKRKIAIVPEEGEAVDYLIPKTKVIDVQEGDFVKKGDTLISGSPNPHDILDVLGVEALAEYLCTEIQEVYRLQGVKINDKHIEVIVRQMLQKVEITDGGDTVLLPGEQVDRDEMDEANAKLGRGKKPATGNPVLLGITKASLQTRSFISAASFQETTRVLTQASVEGKKDTLIGLKENVIVGRLIPAGTGAGMNRMRVTASARDAALRAQWKKQQEKLAAADEAAMAAEKEPEAEVMDADAMAAAMGGDSAGGDTKPEAPEASEE</sequence>
<keyword id="KW-0240">DNA-directed RNA polymerase</keyword>
<keyword id="KW-0460">Magnesium</keyword>
<keyword id="KW-0479">Metal-binding</keyword>
<keyword id="KW-0548">Nucleotidyltransferase</keyword>
<keyword id="KW-1185">Reference proteome</keyword>
<keyword id="KW-0804">Transcription</keyword>
<keyword id="KW-0808">Transferase</keyword>
<keyword id="KW-0862">Zinc</keyword>
<protein>
    <recommendedName>
        <fullName evidence="1">DNA-directed RNA polymerase subunit beta'</fullName>
        <shortName evidence="1">RNAP subunit beta'</shortName>
        <ecNumber evidence="1">2.7.7.6</ecNumber>
    </recommendedName>
    <alternativeName>
        <fullName evidence="1">RNA polymerase subunit beta'</fullName>
    </alternativeName>
    <alternativeName>
        <fullName evidence="1">Transcriptase subunit beta'</fullName>
    </alternativeName>
</protein>
<gene>
    <name evidence="1" type="primary">rpoC</name>
    <name type="ordered locus">ELI_14470</name>
</gene>
<name>RPOC_ERYLH</name>
<reference key="1">
    <citation type="journal article" date="2009" name="J. Bacteriol.">
        <title>Complete genome sequence of Erythrobacter litoralis HTCC2594.</title>
        <authorList>
            <person name="Oh H.M."/>
            <person name="Giovannoni S.J."/>
            <person name="Ferriera S."/>
            <person name="Johnson J."/>
            <person name="Cho J.C."/>
        </authorList>
    </citation>
    <scope>NUCLEOTIDE SEQUENCE [LARGE SCALE GENOMIC DNA]</scope>
    <source>
        <strain>HTCC2594</strain>
    </source>
</reference>
<dbReference type="EC" id="2.7.7.6" evidence="1"/>
<dbReference type="EMBL" id="CP000157">
    <property type="protein sequence ID" value="ABC64986.1"/>
    <property type="molecule type" value="Genomic_DNA"/>
</dbReference>
<dbReference type="RefSeq" id="WP_011415808.1">
    <property type="nucleotide sequence ID" value="NC_007722.1"/>
</dbReference>
<dbReference type="SMR" id="Q2N5Q5"/>
<dbReference type="STRING" id="314225.ELI_14470"/>
<dbReference type="KEGG" id="eli:ELI_14470"/>
<dbReference type="eggNOG" id="COG0086">
    <property type="taxonomic scope" value="Bacteria"/>
</dbReference>
<dbReference type="HOGENOM" id="CLU_000524_3_1_5"/>
<dbReference type="OrthoDB" id="9815296at2"/>
<dbReference type="Proteomes" id="UP000008808">
    <property type="component" value="Chromosome"/>
</dbReference>
<dbReference type="GO" id="GO:0000428">
    <property type="term" value="C:DNA-directed RNA polymerase complex"/>
    <property type="evidence" value="ECO:0007669"/>
    <property type="project" value="UniProtKB-KW"/>
</dbReference>
<dbReference type="GO" id="GO:0003677">
    <property type="term" value="F:DNA binding"/>
    <property type="evidence" value="ECO:0007669"/>
    <property type="project" value="UniProtKB-UniRule"/>
</dbReference>
<dbReference type="GO" id="GO:0003899">
    <property type="term" value="F:DNA-directed RNA polymerase activity"/>
    <property type="evidence" value="ECO:0007669"/>
    <property type="project" value="UniProtKB-UniRule"/>
</dbReference>
<dbReference type="GO" id="GO:0000287">
    <property type="term" value="F:magnesium ion binding"/>
    <property type="evidence" value="ECO:0007669"/>
    <property type="project" value="UniProtKB-UniRule"/>
</dbReference>
<dbReference type="GO" id="GO:0008270">
    <property type="term" value="F:zinc ion binding"/>
    <property type="evidence" value="ECO:0007669"/>
    <property type="project" value="UniProtKB-UniRule"/>
</dbReference>
<dbReference type="GO" id="GO:0006351">
    <property type="term" value="P:DNA-templated transcription"/>
    <property type="evidence" value="ECO:0007669"/>
    <property type="project" value="UniProtKB-UniRule"/>
</dbReference>
<dbReference type="CDD" id="cd02655">
    <property type="entry name" value="RNAP_beta'_C"/>
    <property type="match status" value="1"/>
</dbReference>
<dbReference type="CDD" id="cd01609">
    <property type="entry name" value="RNAP_beta'_N"/>
    <property type="match status" value="1"/>
</dbReference>
<dbReference type="FunFam" id="1.10.132.30:FF:000003">
    <property type="entry name" value="DNA-directed RNA polymerase subunit beta"/>
    <property type="match status" value="1"/>
</dbReference>
<dbReference type="FunFam" id="4.10.860.120:FF:000001">
    <property type="entry name" value="DNA-directed RNA polymerase subunit beta"/>
    <property type="match status" value="1"/>
</dbReference>
<dbReference type="Gene3D" id="1.10.132.30">
    <property type="match status" value="1"/>
</dbReference>
<dbReference type="Gene3D" id="1.10.150.390">
    <property type="match status" value="1"/>
</dbReference>
<dbReference type="Gene3D" id="1.10.1790.20">
    <property type="match status" value="1"/>
</dbReference>
<dbReference type="Gene3D" id="1.10.40.90">
    <property type="match status" value="1"/>
</dbReference>
<dbReference type="Gene3D" id="2.40.40.20">
    <property type="match status" value="1"/>
</dbReference>
<dbReference type="Gene3D" id="2.40.50.100">
    <property type="match status" value="3"/>
</dbReference>
<dbReference type="Gene3D" id="4.10.860.120">
    <property type="entry name" value="RNA polymerase II, clamp domain"/>
    <property type="match status" value="1"/>
</dbReference>
<dbReference type="Gene3D" id="1.10.274.100">
    <property type="entry name" value="RNA polymerase Rpb1, domain 3"/>
    <property type="match status" value="2"/>
</dbReference>
<dbReference type="HAMAP" id="MF_01322">
    <property type="entry name" value="RNApol_bact_RpoC"/>
    <property type="match status" value="1"/>
</dbReference>
<dbReference type="InterPro" id="IPR045867">
    <property type="entry name" value="DNA-dir_RpoC_beta_prime"/>
</dbReference>
<dbReference type="InterPro" id="IPR012754">
    <property type="entry name" value="DNA-dir_RpoC_beta_prime_bact"/>
</dbReference>
<dbReference type="InterPro" id="IPR000722">
    <property type="entry name" value="RNA_pol_asu"/>
</dbReference>
<dbReference type="InterPro" id="IPR006592">
    <property type="entry name" value="RNA_pol_N"/>
</dbReference>
<dbReference type="InterPro" id="IPR007080">
    <property type="entry name" value="RNA_pol_Rpb1_1"/>
</dbReference>
<dbReference type="InterPro" id="IPR007066">
    <property type="entry name" value="RNA_pol_Rpb1_3"/>
</dbReference>
<dbReference type="InterPro" id="IPR042102">
    <property type="entry name" value="RNA_pol_Rpb1_3_sf"/>
</dbReference>
<dbReference type="InterPro" id="IPR007083">
    <property type="entry name" value="RNA_pol_Rpb1_4"/>
</dbReference>
<dbReference type="InterPro" id="IPR007081">
    <property type="entry name" value="RNA_pol_Rpb1_5"/>
</dbReference>
<dbReference type="InterPro" id="IPR044893">
    <property type="entry name" value="RNA_pol_Rpb1_clamp_domain"/>
</dbReference>
<dbReference type="InterPro" id="IPR038120">
    <property type="entry name" value="Rpb1_funnel_sf"/>
</dbReference>
<dbReference type="NCBIfam" id="TIGR02386">
    <property type="entry name" value="rpoC_TIGR"/>
    <property type="match status" value="1"/>
</dbReference>
<dbReference type="PANTHER" id="PTHR19376">
    <property type="entry name" value="DNA-DIRECTED RNA POLYMERASE"/>
    <property type="match status" value="1"/>
</dbReference>
<dbReference type="PANTHER" id="PTHR19376:SF54">
    <property type="entry name" value="DNA-DIRECTED RNA POLYMERASE SUBUNIT BETA"/>
    <property type="match status" value="1"/>
</dbReference>
<dbReference type="Pfam" id="PF04997">
    <property type="entry name" value="RNA_pol_Rpb1_1"/>
    <property type="match status" value="1"/>
</dbReference>
<dbReference type="Pfam" id="PF00623">
    <property type="entry name" value="RNA_pol_Rpb1_2"/>
    <property type="match status" value="1"/>
</dbReference>
<dbReference type="Pfam" id="PF04983">
    <property type="entry name" value="RNA_pol_Rpb1_3"/>
    <property type="match status" value="1"/>
</dbReference>
<dbReference type="Pfam" id="PF05000">
    <property type="entry name" value="RNA_pol_Rpb1_4"/>
    <property type="match status" value="1"/>
</dbReference>
<dbReference type="Pfam" id="PF04998">
    <property type="entry name" value="RNA_pol_Rpb1_5"/>
    <property type="match status" value="1"/>
</dbReference>
<dbReference type="SMART" id="SM00663">
    <property type="entry name" value="RPOLA_N"/>
    <property type="match status" value="1"/>
</dbReference>
<dbReference type="SUPFAM" id="SSF64484">
    <property type="entry name" value="beta and beta-prime subunits of DNA dependent RNA-polymerase"/>
    <property type="match status" value="1"/>
</dbReference>